<comment type="function">
    <text evidence="1">Catalyzes the conversion of uracil and 5-phospho-alpha-D-ribose 1-diphosphate (PRPP) to UMP and diphosphate.</text>
</comment>
<comment type="catalytic activity">
    <reaction evidence="1">
        <text>UMP + diphosphate = 5-phospho-alpha-D-ribose 1-diphosphate + uracil</text>
        <dbReference type="Rhea" id="RHEA:13017"/>
        <dbReference type="ChEBI" id="CHEBI:17568"/>
        <dbReference type="ChEBI" id="CHEBI:33019"/>
        <dbReference type="ChEBI" id="CHEBI:57865"/>
        <dbReference type="ChEBI" id="CHEBI:58017"/>
        <dbReference type="EC" id="2.4.2.9"/>
    </reaction>
</comment>
<comment type="cofactor">
    <cofactor evidence="1">
        <name>Mg(2+)</name>
        <dbReference type="ChEBI" id="CHEBI:18420"/>
    </cofactor>
    <text evidence="1">Binds 1 Mg(2+) ion per subunit. The magnesium is bound as Mg-PRPP.</text>
</comment>
<comment type="activity regulation">
    <text evidence="1">Allosterically activated by GTP.</text>
</comment>
<comment type="pathway">
    <text evidence="1">Pyrimidine metabolism; UMP biosynthesis via salvage pathway; UMP from uracil: step 1/1.</text>
</comment>
<comment type="similarity">
    <text evidence="1">Belongs to the UPRTase family.</text>
</comment>
<proteinExistence type="inferred from homology"/>
<gene>
    <name evidence="1" type="primary">upp</name>
    <name type="ordered locus">Daci_3518</name>
</gene>
<keyword id="KW-0021">Allosteric enzyme</keyword>
<keyword id="KW-0328">Glycosyltransferase</keyword>
<keyword id="KW-0342">GTP-binding</keyword>
<keyword id="KW-0460">Magnesium</keyword>
<keyword id="KW-0547">Nucleotide-binding</keyword>
<keyword id="KW-1185">Reference proteome</keyword>
<keyword id="KW-0808">Transferase</keyword>
<name>UPP_DELAS</name>
<evidence type="ECO:0000255" key="1">
    <source>
        <dbReference type="HAMAP-Rule" id="MF_01218"/>
    </source>
</evidence>
<protein>
    <recommendedName>
        <fullName evidence="1">Uracil phosphoribosyltransferase</fullName>
        <ecNumber evidence="1">2.4.2.9</ecNumber>
    </recommendedName>
    <alternativeName>
        <fullName evidence="1">UMP pyrophosphorylase</fullName>
    </alternativeName>
    <alternativeName>
        <fullName evidence="1">UPRTase</fullName>
    </alternativeName>
</protein>
<accession>A9BWD4</accession>
<dbReference type="EC" id="2.4.2.9" evidence="1"/>
<dbReference type="EMBL" id="CP000884">
    <property type="protein sequence ID" value="ABX36154.1"/>
    <property type="molecule type" value="Genomic_DNA"/>
</dbReference>
<dbReference type="RefSeq" id="WP_012205354.1">
    <property type="nucleotide sequence ID" value="NC_010002.1"/>
</dbReference>
<dbReference type="SMR" id="A9BWD4"/>
<dbReference type="STRING" id="398578.Daci_3518"/>
<dbReference type="GeneID" id="94692701"/>
<dbReference type="KEGG" id="dac:Daci_3518"/>
<dbReference type="eggNOG" id="COG0035">
    <property type="taxonomic scope" value="Bacteria"/>
</dbReference>
<dbReference type="HOGENOM" id="CLU_067096_2_2_4"/>
<dbReference type="UniPathway" id="UPA00574">
    <property type="reaction ID" value="UER00636"/>
</dbReference>
<dbReference type="Proteomes" id="UP000000784">
    <property type="component" value="Chromosome"/>
</dbReference>
<dbReference type="GO" id="GO:0005525">
    <property type="term" value="F:GTP binding"/>
    <property type="evidence" value="ECO:0007669"/>
    <property type="project" value="UniProtKB-KW"/>
</dbReference>
<dbReference type="GO" id="GO:0000287">
    <property type="term" value="F:magnesium ion binding"/>
    <property type="evidence" value="ECO:0007669"/>
    <property type="project" value="UniProtKB-UniRule"/>
</dbReference>
<dbReference type="GO" id="GO:0004845">
    <property type="term" value="F:uracil phosphoribosyltransferase activity"/>
    <property type="evidence" value="ECO:0007669"/>
    <property type="project" value="UniProtKB-UniRule"/>
</dbReference>
<dbReference type="GO" id="GO:0044206">
    <property type="term" value="P:UMP salvage"/>
    <property type="evidence" value="ECO:0007669"/>
    <property type="project" value="UniProtKB-UniRule"/>
</dbReference>
<dbReference type="GO" id="GO:0006223">
    <property type="term" value="P:uracil salvage"/>
    <property type="evidence" value="ECO:0007669"/>
    <property type="project" value="InterPro"/>
</dbReference>
<dbReference type="CDD" id="cd06223">
    <property type="entry name" value="PRTases_typeI"/>
    <property type="match status" value="1"/>
</dbReference>
<dbReference type="FunFam" id="3.40.50.2020:FF:000003">
    <property type="entry name" value="Uracil phosphoribosyltransferase"/>
    <property type="match status" value="1"/>
</dbReference>
<dbReference type="Gene3D" id="3.40.50.2020">
    <property type="match status" value="1"/>
</dbReference>
<dbReference type="HAMAP" id="MF_01218_B">
    <property type="entry name" value="Upp_B"/>
    <property type="match status" value="1"/>
</dbReference>
<dbReference type="InterPro" id="IPR000836">
    <property type="entry name" value="PRibTrfase_dom"/>
</dbReference>
<dbReference type="InterPro" id="IPR029057">
    <property type="entry name" value="PRTase-like"/>
</dbReference>
<dbReference type="InterPro" id="IPR034332">
    <property type="entry name" value="Upp_B"/>
</dbReference>
<dbReference type="InterPro" id="IPR050054">
    <property type="entry name" value="UPRTase/APRTase"/>
</dbReference>
<dbReference type="InterPro" id="IPR005765">
    <property type="entry name" value="Ura_phspho_trans"/>
</dbReference>
<dbReference type="NCBIfam" id="NF001097">
    <property type="entry name" value="PRK00129.1"/>
    <property type="match status" value="1"/>
</dbReference>
<dbReference type="NCBIfam" id="TIGR01091">
    <property type="entry name" value="upp"/>
    <property type="match status" value="1"/>
</dbReference>
<dbReference type="PANTHER" id="PTHR32315">
    <property type="entry name" value="ADENINE PHOSPHORIBOSYLTRANSFERASE"/>
    <property type="match status" value="1"/>
</dbReference>
<dbReference type="PANTHER" id="PTHR32315:SF4">
    <property type="entry name" value="URACIL PHOSPHORIBOSYLTRANSFERASE, CHLOROPLASTIC"/>
    <property type="match status" value="1"/>
</dbReference>
<dbReference type="Pfam" id="PF14681">
    <property type="entry name" value="UPRTase"/>
    <property type="match status" value="1"/>
</dbReference>
<dbReference type="SUPFAM" id="SSF53271">
    <property type="entry name" value="PRTase-like"/>
    <property type="match status" value="1"/>
</dbReference>
<sequence length="209" mass="23074">MSTLHLIDHPLVQHKLTLMRRKEASTNSFRRMLGELSTLMAYEITRDMPLQDIEIETPLETMTGKVIDGKKLVLVSILRAGNGFLDGMLNVVPGARIGHIGLYRDPETLQPVEYYFKMPSEMEERDVLVVDPMLATGNSAAAAVARLKQLNPKSIKFMCLLAAPEGVATMQKAHPDVDIYTAAVDRQLDAHGYILPGLGDAGDRIFGTK</sequence>
<feature type="chain" id="PRO_1000139113" description="Uracil phosphoribosyltransferase">
    <location>
        <begin position="1"/>
        <end position="209"/>
    </location>
</feature>
<feature type="binding site" evidence="1">
    <location>
        <position position="79"/>
    </location>
    <ligand>
        <name>5-phospho-alpha-D-ribose 1-diphosphate</name>
        <dbReference type="ChEBI" id="CHEBI:58017"/>
    </ligand>
</feature>
<feature type="binding site" evidence="1">
    <location>
        <position position="104"/>
    </location>
    <ligand>
        <name>5-phospho-alpha-D-ribose 1-diphosphate</name>
        <dbReference type="ChEBI" id="CHEBI:58017"/>
    </ligand>
</feature>
<feature type="binding site" evidence="1">
    <location>
        <begin position="131"/>
        <end position="139"/>
    </location>
    <ligand>
        <name>5-phospho-alpha-D-ribose 1-diphosphate</name>
        <dbReference type="ChEBI" id="CHEBI:58017"/>
    </ligand>
</feature>
<feature type="binding site" evidence="1">
    <location>
        <position position="194"/>
    </location>
    <ligand>
        <name>uracil</name>
        <dbReference type="ChEBI" id="CHEBI:17568"/>
    </ligand>
</feature>
<feature type="binding site" evidence="1">
    <location>
        <begin position="199"/>
        <end position="201"/>
    </location>
    <ligand>
        <name>uracil</name>
        <dbReference type="ChEBI" id="CHEBI:17568"/>
    </ligand>
</feature>
<feature type="binding site" evidence="1">
    <location>
        <position position="200"/>
    </location>
    <ligand>
        <name>5-phospho-alpha-D-ribose 1-diphosphate</name>
        <dbReference type="ChEBI" id="CHEBI:58017"/>
    </ligand>
</feature>
<organism>
    <name type="scientific">Delftia acidovorans (strain DSM 14801 / SPH-1)</name>
    <dbReference type="NCBI Taxonomy" id="398578"/>
    <lineage>
        <taxon>Bacteria</taxon>
        <taxon>Pseudomonadati</taxon>
        <taxon>Pseudomonadota</taxon>
        <taxon>Betaproteobacteria</taxon>
        <taxon>Burkholderiales</taxon>
        <taxon>Comamonadaceae</taxon>
        <taxon>Delftia</taxon>
    </lineage>
</organism>
<reference key="1">
    <citation type="submission" date="2007-11" db="EMBL/GenBank/DDBJ databases">
        <title>Complete sequence of Delftia acidovorans DSM 14801 / SPH-1.</title>
        <authorList>
            <person name="Copeland A."/>
            <person name="Lucas S."/>
            <person name="Lapidus A."/>
            <person name="Barry K."/>
            <person name="Glavina del Rio T."/>
            <person name="Dalin E."/>
            <person name="Tice H."/>
            <person name="Pitluck S."/>
            <person name="Lowry S."/>
            <person name="Clum A."/>
            <person name="Schmutz J."/>
            <person name="Larimer F."/>
            <person name="Land M."/>
            <person name="Hauser L."/>
            <person name="Kyrpides N."/>
            <person name="Kim E."/>
            <person name="Schleheck D."/>
            <person name="Richardson P."/>
        </authorList>
    </citation>
    <scope>NUCLEOTIDE SEQUENCE [LARGE SCALE GENOMIC DNA]</scope>
    <source>
        <strain>DSM 14801 / SPH-1</strain>
    </source>
</reference>